<comment type="function">
    <text evidence="2 3">Probably participates in a plant defense mechanism (By similarity). Has strong cytotoxic activity against HUVEC cells (LC(50)= 0.58 uM) and various cancer cells including HeLa (LC(50)= 0.48 uM), MCF-7 and K562 (PubMed:32414842). Also displays some hemolytic activity (PubMed:32414842). Binds to and induces leakage in phospholipd membranes, particularly ones containing 1-palmitoyl-2-oleophosphatidylethanolamine (POPE) (PubMed:32414842).</text>
</comment>
<comment type="tissue specificity">
    <text evidence="3">Detected in stems (at protein level).</text>
</comment>
<comment type="domain">
    <text evidence="5">The presence of a 'disulfide through disulfide knot' structurally defines this protein as a knottin.</text>
</comment>
<comment type="PTM">
    <text evidence="2">This is a cyclic peptide.</text>
</comment>
<comment type="mass spectrometry"/>
<comment type="similarity">
    <text evidence="2">Belongs to the cyclotide family. Bracelet subfamily.</text>
</comment>
<comment type="caution">
    <text evidence="2">This peptide is cyclic. The start position was chosen by similarity to Oak1 (kalata B1) for which the DNA sequence is known.</text>
</comment>
<name>CYHED_PIGEN</name>
<organism evidence="4">
    <name type="scientific">Pigea enneasperma</name>
    <name type="common">Spade flower</name>
    <name type="synonym">Afrohybanthus enneaspermus</name>
    <dbReference type="NCBI Taxonomy" id="212266"/>
    <lineage>
        <taxon>Eukaryota</taxon>
        <taxon>Viridiplantae</taxon>
        <taxon>Streptophyta</taxon>
        <taxon>Embryophyta</taxon>
        <taxon>Tracheophyta</taxon>
        <taxon>Spermatophyta</taxon>
        <taxon>Magnoliopsida</taxon>
        <taxon>eudicotyledons</taxon>
        <taxon>Gunneridae</taxon>
        <taxon>Pentapetalae</taxon>
        <taxon>rosids</taxon>
        <taxon>fabids</taxon>
        <taxon>Malpighiales</taxon>
        <taxon>Violaceae</taxon>
        <taxon>Pigea</taxon>
    </lineage>
</organism>
<sequence>GFPCGESCVYIPCFTAAIGCSCKSKVCYKN</sequence>
<accession>C0HLN8</accession>
<protein>
    <recommendedName>
        <fullName evidence="4">Cyclotide hyen-D</fullName>
    </recommendedName>
</protein>
<keyword id="KW-0002">3D-structure</keyword>
<keyword id="KW-0903">Direct protein sequencing</keyword>
<keyword id="KW-1015">Disulfide bond</keyword>
<keyword id="KW-0960">Knottin</keyword>
<keyword id="KW-0611">Plant defense</keyword>
<dbReference type="PDB" id="7RIH">
    <property type="method" value="X-ray"/>
    <property type="resolution" value="1.35 A"/>
    <property type="chains" value="B=1-30"/>
</dbReference>
<dbReference type="PDB" id="7RII">
    <property type="method" value="X-ray"/>
    <property type="resolution" value="1.22 A"/>
    <property type="chains" value="A=1-30"/>
</dbReference>
<dbReference type="PDB" id="7RIJ">
    <property type="method" value="X-ray"/>
    <property type="resolution" value="1.30 A"/>
    <property type="chains" value="A=1-30"/>
</dbReference>
<dbReference type="PDB" id="7RN3">
    <property type="method" value="NMR"/>
    <property type="chains" value="A=1-30"/>
</dbReference>
<dbReference type="PDBsum" id="7RIH"/>
<dbReference type="PDBsum" id="7RII"/>
<dbReference type="PDBsum" id="7RIJ"/>
<dbReference type="PDBsum" id="7RN3"/>
<dbReference type="SMR" id="C0HLN8"/>
<dbReference type="GO" id="GO:0051715">
    <property type="term" value="P:cytolysis in another organism"/>
    <property type="evidence" value="ECO:0000314"/>
    <property type="project" value="UniProtKB"/>
</dbReference>
<dbReference type="GO" id="GO:0006952">
    <property type="term" value="P:defense response"/>
    <property type="evidence" value="ECO:0000314"/>
    <property type="project" value="UniProtKB"/>
</dbReference>
<dbReference type="GO" id="GO:0044179">
    <property type="term" value="P:hemolysis in another organism"/>
    <property type="evidence" value="ECO:0000314"/>
    <property type="project" value="UniProtKB"/>
</dbReference>
<dbReference type="InterPro" id="IPR005535">
    <property type="entry name" value="Cyclotide"/>
</dbReference>
<dbReference type="InterPro" id="IPR012323">
    <property type="entry name" value="Cyclotide_bracelet_CS"/>
</dbReference>
<dbReference type="InterPro" id="IPR036146">
    <property type="entry name" value="Cyclotide_sf"/>
</dbReference>
<dbReference type="Pfam" id="PF03784">
    <property type="entry name" value="Cyclotide"/>
    <property type="match status" value="1"/>
</dbReference>
<dbReference type="PIRSF" id="PIRSF037891">
    <property type="entry name" value="Cycloviolacin"/>
    <property type="match status" value="1"/>
</dbReference>
<dbReference type="SUPFAM" id="SSF57038">
    <property type="entry name" value="Cyclotides"/>
    <property type="match status" value="1"/>
</dbReference>
<dbReference type="PROSITE" id="PS51052">
    <property type="entry name" value="CYCLOTIDE"/>
    <property type="match status" value="1"/>
</dbReference>
<dbReference type="PROSITE" id="PS60008">
    <property type="entry name" value="CYCLOTIDE_BRACELET"/>
    <property type="match status" value="1"/>
</dbReference>
<feature type="peptide" id="PRO_0000450760" description="Cyclotide hyen-D" evidence="2">
    <location>
        <begin position="1"/>
        <end position="30"/>
    </location>
</feature>
<feature type="disulfide bond" evidence="2 3">
    <location>
        <begin position="4"/>
        <end position="20"/>
    </location>
</feature>
<feature type="disulfide bond" evidence="2 3">
    <location>
        <begin position="8"/>
        <end position="22"/>
    </location>
</feature>
<feature type="disulfide bond" evidence="2 3">
    <location>
        <begin position="13"/>
        <end position="27"/>
    </location>
</feature>
<feature type="cross-link" description="Cyclopeptide (Gly-Asn)" evidence="1">
    <location>
        <begin position="1"/>
        <end position="30"/>
    </location>
</feature>
<feature type="strand" evidence="6">
    <location>
        <begin position="2"/>
        <end position="7"/>
    </location>
</feature>
<feature type="strand" evidence="6">
    <location>
        <begin position="9"/>
        <end position="11"/>
    </location>
</feature>
<feature type="helix" evidence="6">
    <location>
        <begin position="14"/>
        <end position="18"/>
    </location>
</feature>
<feature type="strand" evidence="6">
    <location>
        <begin position="21"/>
        <end position="23"/>
    </location>
</feature>
<feature type="strand" evidence="6">
    <location>
        <begin position="26"/>
        <end position="29"/>
    </location>
</feature>
<reference evidence="5" key="1">
    <citation type="journal article" date="2020" name="J. Biol. Chem.">
        <title>Discovery and mechanistic studies of cytotoxic cyclotides from the medicinal herb Hybanthus enneaspermus.</title>
        <authorList>
            <person name="Du Q."/>
            <person name="Chan L.Y."/>
            <person name="Gilding E.K."/>
            <person name="Henriques S.T."/>
            <person name="Condon N.D."/>
            <person name="Ravipati A.S."/>
            <person name="Kaas Q."/>
            <person name="Huang Y.H."/>
            <person name="Craik D.J."/>
        </authorList>
    </citation>
    <scope>PROTEIN SEQUENCE</scope>
    <scope>MASS SPECTROMETRY</scope>
    <scope>FUNCTION</scope>
    <scope>TISSUE SPECIFICITY</scope>
    <scope>DOMAIN</scope>
    <scope>DISULFIDE BONDS</scope>
</reference>
<evidence type="ECO:0000250" key="1">
    <source>
        <dbReference type="UniProtKB" id="C0HKI7"/>
    </source>
</evidence>
<evidence type="ECO:0000255" key="2">
    <source>
        <dbReference type="PROSITE-ProRule" id="PRU00395"/>
    </source>
</evidence>
<evidence type="ECO:0000269" key="3">
    <source>
    </source>
</evidence>
<evidence type="ECO:0000303" key="4">
    <source>
    </source>
</evidence>
<evidence type="ECO:0000305" key="5"/>
<evidence type="ECO:0007829" key="6">
    <source>
        <dbReference type="PDB" id="7RII"/>
    </source>
</evidence>
<proteinExistence type="evidence at protein level"/>